<organism>
    <name type="scientific">Escherichia coli O7:K1 (strain IAI39 / ExPEC)</name>
    <dbReference type="NCBI Taxonomy" id="585057"/>
    <lineage>
        <taxon>Bacteria</taxon>
        <taxon>Pseudomonadati</taxon>
        <taxon>Pseudomonadota</taxon>
        <taxon>Gammaproteobacteria</taxon>
        <taxon>Enterobacterales</taxon>
        <taxon>Enterobacteriaceae</taxon>
        <taxon>Escherichia</taxon>
    </lineage>
</organism>
<dbReference type="EC" id="2.1.1.223" evidence="1"/>
<dbReference type="EMBL" id="CU928164">
    <property type="protein sequence ID" value="CAR18902.1"/>
    <property type="molecule type" value="Genomic_DNA"/>
</dbReference>
<dbReference type="RefSeq" id="YP_002408718.1">
    <property type="nucleotide sequence ID" value="NC_011750.1"/>
</dbReference>
<dbReference type="SMR" id="B7NRM8"/>
<dbReference type="STRING" id="585057.ECIAI39_2780"/>
<dbReference type="KEGG" id="ect:ECIAI39_2780"/>
<dbReference type="PATRIC" id="fig|585057.6.peg.2888"/>
<dbReference type="HOGENOM" id="CLU_061983_0_0_6"/>
<dbReference type="Proteomes" id="UP000000749">
    <property type="component" value="Chromosome"/>
</dbReference>
<dbReference type="GO" id="GO:0005737">
    <property type="term" value="C:cytoplasm"/>
    <property type="evidence" value="ECO:0007669"/>
    <property type="project" value="UniProtKB-SubCell"/>
</dbReference>
<dbReference type="GO" id="GO:0003676">
    <property type="term" value="F:nucleic acid binding"/>
    <property type="evidence" value="ECO:0007669"/>
    <property type="project" value="InterPro"/>
</dbReference>
<dbReference type="GO" id="GO:0016430">
    <property type="term" value="F:tRNA (adenine-N6)-methyltransferase activity"/>
    <property type="evidence" value="ECO:0007669"/>
    <property type="project" value="UniProtKB-UniRule"/>
</dbReference>
<dbReference type="GO" id="GO:0032259">
    <property type="term" value="P:methylation"/>
    <property type="evidence" value="ECO:0007669"/>
    <property type="project" value="UniProtKB-KW"/>
</dbReference>
<dbReference type="GO" id="GO:0008033">
    <property type="term" value="P:tRNA processing"/>
    <property type="evidence" value="ECO:0007669"/>
    <property type="project" value="UniProtKB-UniRule"/>
</dbReference>
<dbReference type="CDD" id="cd02440">
    <property type="entry name" value="AdoMet_MTases"/>
    <property type="match status" value="1"/>
</dbReference>
<dbReference type="FunFam" id="3.40.50.150:FF:000087">
    <property type="entry name" value="tRNA1(Val) (adenine(37)-N6)-methyltransferase"/>
    <property type="match status" value="1"/>
</dbReference>
<dbReference type="Gene3D" id="3.40.50.150">
    <property type="entry name" value="Vaccinia Virus protein VP39"/>
    <property type="match status" value="1"/>
</dbReference>
<dbReference type="HAMAP" id="MF_01872">
    <property type="entry name" value="tRNA_methyltr_YfiC"/>
    <property type="match status" value="1"/>
</dbReference>
<dbReference type="InterPro" id="IPR002052">
    <property type="entry name" value="DNA_methylase_N6_adenine_CS"/>
</dbReference>
<dbReference type="InterPro" id="IPR029063">
    <property type="entry name" value="SAM-dependent_MTases_sf"/>
</dbReference>
<dbReference type="InterPro" id="IPR007848">
    <property type="entry name" value="Small_mtfrase_dom"/>
</dbReference>
<dbReference type="InterPro" id="IPR050210">
    <property type="entry name" value="tRNA_Adenine-N(6)_MTase"/>
</dbReference>
<dbReference type="InterPro" id="IPR022882">
    <property type="entry name" value="tRNA_adenine-N6_MeTrfase"/>
</dbReference>
<dbReference type="NCBIfam" id="NF047853">
    <property type="entry name" value="tRm6a37MtseTrmN"/>
    <property type="match status" value="1"/>
</dbReference>
<dbReference type="PANTHER" id="PTHR47739">
    <property type="entry name" value="TRNA1(VAL) (ADENINE(37)-N6)-METHYLTRANSFERASE"/>
    <property type="match status" value="1"/>
</dbReference>
<dbReference type="PANTHER" id="PTHR47739:SF1">
    <property type="entry name" value="TRNA1(VAL) (ADENINE(37)-N6)-METHYLTRANSFERASE"/>
    <property type="match status" value="1"/>
</dbReference>
<dbReference type="Pfam" id="PF05175">
    <property type="entry name" value="MTS"/>
    <property type="match status" value="1"/>
</dbReference>
<dbReference type="SUPFAM" id="SSF53335">
    <property type="entry name" value="S-adenosyl-L-methionine-dependent methyltransferases"/>
    <property type="match status" value="1"/>
</dbReference>
<dbReference type="PROSITE" id="PS00092">
    <property type="entry name" value="N6_MTASE"/>
    <property type="match status" value="1"/>
</dbReference>
<sequence>MSQSTFVLRRNGFTFKQFFVAHDRCAMKVGTDGILLGAWAPVAGVKRCLDIGAGSGLLALMLAQRTDDSVMIDAVELESEAAAQAQENINQSPWAERINVHTADIQQWITQQTVRFDLIISNPPYYQQGVECSTPQREQARYTTTLDHPSLLTCAAECITEEGFFCVVLPEQIGNGFTELALSMGWHLRLRTDVAENEARLPHRVLLAFSPQAGECFSDRLVIRGPDQNYSEAYTALTQAFYLFM</sequence>
<feature type="chain" id="PRO_0000387374" description="tRNA1(Val) (adenine(37)-N6)-methyltransferase">
    <location>
        <begin position="1"/>
        <end position="245"/>
    </location>
</feature>
<name>TRMN6_ECO7I</name>
<comment type="function">
    <text evidence="1">Specifically methylates the adenine in position 37 of tRNA(1)(Val) (anticodon cmo5UAC).</text>
</comment>
<comment type="catalytic activity">
    <reaction evidence="1">
        <text>adenosine(37) in tRNA1(Val) + S-adenosyl-L-methionine = N(6)-methyladenosine(37) in tRNA1(Val) + S-adenosyl-L-homocysteine + H(+)</text>
        <dbReference type="Rhea" id="RHEA:43160"/>
        <dbReference type="Rhea" id="RHEA-COMP:10369"/>
        <dbReference type="Rhea" id="RHEA-COMP:10370"/>
        <dbReference type="ChEBI" id="CHEBI:15378"/>
        <dbReference type="ChEBI" id="CHEBI:57856"/>
        <dbReference type="ChEBI" id="CHEBI:59789"/>
        <dbReference type="ChEBI" id="CHEBI:74411"/>
        <dbReference type="ChEBI" id="CHEBI:74449"/>
        <dbReference type="EC" id="2.1.1.223"/>
    </reaction>
</comment>
<comment type="subcellular location">
    <subcellularLocation>
        <location evidence="1">Cytoplasm</location>
    </subcellularLocation>
</comment>
<comment type="similarity">
    <text evidence="1">Belongs to the methyltransferase superfamily. tRNA (adenine-N(6)-)-methyltransferase family.</text>
</comment>
<proteinExistence type="inferred from homology"/>
<protein>
    <recommendedName>
        <fullName evidence="1">tRNA1(Val) (adenine(37)-N6)-methyltransferase</fullName>
        <ecNumber evidence="1">2.1.1.223</ecNumber>
    </recommendedName>
    <alternativeName>
        <fullName evidence="1">tRNA m6A37 methyltransferase</fullName>
    </alternativeName>
</protein>
<gene>
    <name evidence="1" type="primary">yfiC</name>
    <name type="ordered locus">ECIAI39_2780</name>
</gene>
<accession>B7NRM8</accession>
<reference key="1">
    <citation type="journal article" date="2009" name="PLoS Genet.">
        <title>Organised genome dynamics in the Escherichia coli species results in highly diverse adaptive paths.</title>
        <authorList>
            <person name="Touchon M."/>
            <person name="Hoede C."/>
            <person name="Tenaillon O."/>
            <person name="Barbe V."/>
            <person name="Baeriswyl S."/>
            <person name="Bidet P."/>
            <person name="Bingen E."/>
            <person name="Bonacorsi S."/>
            <person name="Bouchier C."/>
            <person name="Bouvet O."/>
            <person name="Calteau A."/>
            <person name="Chiapello H."/>
            <person name="Clermont O."/>
            <person name="Cruveiller S."/>
            <person name="Danchin A."/>
            <person name="Diard M."/>
            <person name="Dossat C."/>
            <person name="Karoui M.E."/>
            <person name="Frapy E."/>
            <person name="Garry L."/>
            <person name="Ghigo J.M."/>
            <person name="Gilles A.M."/>
            <person name="Johnson J."/>
            <person name="Le Bouguenec C."/>
            <person name="Lescat M."/>
            <person name="Mangenot S."/>
            <person name="Martinez-Jehanne V."/>
            <person name="Matic I."/>
            <person name="Nassif X."/>
            <person name="Oztas S."/>
            <person name="Petit M.A."/>
            <person name="Pichon C."/>
            <person name="Rouy Z."/>
            <person name="Ruf C.S."/>
            <person name="Schneider D."/>
            <person name="Tourret J."/>
            <person name="Vacherie B."/>
            <person name="Vallenet D."/>
            <person name="Medigue C."/>
            <person name="Rocha E.P.C."/>
            <person name="Denamur E."/>
        </authorList>
    </citation>
    <scope>NUCLEOTIDE SEQUENCE [LARGE SCALE GENOMIC DNA]</scope>
    <source>
        <strain>IAI39 / ExPEC</strain>
    </source>
</reference>
<evidence type="ECO:0000255" key="1">
    <source>
        <dbReference type="HAMAP-Rule" id="MF_01872"/>
    </source>
</evidence>
<keyword id="KW-0963">Cytoplasm</keyword>
<keyword id="KW-0489">Methyltransferase</keyword>
<keyword id="KW-0949">S-adenosyl-L-methionine</keyword>
<keyword id="KW-0808">Transferase</keyword>
<keyword id="KW-0819">tRNA processing</keyword>